<comment type="function">
    <text evidence="1">Decarboxylates L-threonine-O-3-phosphate to yield (R)-1-amino-2-propanol O-2-phosphate, the precursor for the linkage between the nucleotide loop and the corrin ring in cobalamin.</text>
</comment>
<comment type="catalytic activity">
    <reaction>
        <text>O-phospho-L-threonine + H(+) = (R)-1-aminopropan-2-yl phosphate + CO2</text>
        <dbReference type="Rhea" id="RHEA:11492"/>
        <dbReference type="ChEBI" id="CHEBI:15378"/>
        <dbReference type="ChEBI" id="CHEBI:16526"/>
        <dbReference type="ChEBI" id="CHEBI:58563"/>
        <dbReference type="ChEBI" id="CHEBI:58675"/>
        <dbReference type="EC" id="4.1.1.81"/>
    </reaction>
</comment>
<comment type="cofactor">
    <cofactor evidence="2">
        <name>pyridoxal 5'-phosphate</name>
        <dbReference type="ChEBI" id="CHEBI:597326"/>
    </cofactor>
</comment>
<comment type="pathway">
    <text>Cofactor biosynthesis; adenosylcobalamin biosynthesis.</text>
</comment>
<comment type="subunit">
    <text evidence="1">Homodimer.</text>
</comment>
<comment type="subcellular location">
    <subcellularLocation>
        <location evidence="1">Cytoplasm</location>
    </subcellularLocation>
</comment>
<comment type="similarity">
    <text evidence="2">Belongs to the class-I pyridoxal-phosphate-dependent aminotransferase family.</text>
</comment>
<comment type="caution">
    <text evidence="2">Was originally thought to originate from Pseudomonas denitrificans, but similarity searches show that the sequence is much closer to Sinorhizobium. The entry's taxonomy has been changed.</text>
</comment>
<reference key="1">
    <citation type="journal article" date="1990" name="J. Bacteriol.">
        <title>Nucleotide sequence of a Pseudomonas denitrificans 5.4-kilobase DNA fragment containing five cob genes and identification of structural genes encoding S-adenosyl-L-methionine: uroporphyrinogen III methyltransferase and cobyrinic acid a,c-diamide synthase.</title>
        <authorList>
            <person name="Crouzet J."/>
            <person name="Cauchois L."/>
            <person name="Blanche F."/>
            <person name="Debussche L."/>
            <person name="Thibaut D."/>
            <person name="Rouyez M.-C."/>
            <person name="Rigault S."/>
            <person name="Mayaux J.-F."/>
            <person name="Cameron B."/>
        </authorList>
    </citation>
    <scope>NUCLEOTIDE SEQUENCE [GENOMIC DNA]</scope>
    <source>
        <strain>SC510</strain>
    </source>
</reference>
<dbReference type="EC" id="4.1.1.81"/>
<dbReference type="EMBL" id="M59236">
    <property type="protein sequence ID" value="AAA25775.1"/>
    <property type="molecule type" value="Genomic_DNA"/>
</dbReference>
<dbReference type="SMR" id="P21633"/>
<dbReference type="BioCyc" id="MetaCyc:MONOMER-141"/>
<dbReference type="UniPathway" id="UPA00148"/>
<dbReference type="GO" id="GO:0005737">
    <property type="term" value="C:cytoplasm"/>
    <property type="evidence" value="ECO:0007669"/>
    <property type="project" value="UniProtKB-SubCell"/>
</dbReference>
<dbReference type="GO" id="GO:0030170">
    <property type="term" value="F:pyridoxal phosphate binding"/>
    <property type="evidence" value="ECO:0007669"/>
    <property type="project" value="InterPro"/>
</dbReference>
<dbReference type="GO" id="GO:0048472">
    <property type="term" value="F:threonine-phosphate decarboxylase activity"/>
    <property type="evidence" value="ECO:0007669"/>
    <property type="project" value="UniProtKB-EC"/>
</dbReference>
<dbReference type="GO" id="GO:0009236">
    <property type="term" value="P:cobalamin biosynthetic process"/>
    <property type="evidence" value="ECO:0007669"/>
    <property type="project" value="UniProtKB-UniPathway"/>
</dbReference>
<dbReference type="CDD" id="cd00609">
    <property type="entry name" value="AAT_like"/>
    <property type="match status" value="1"/>
</dbReference>
<dbReference type="Gene3D" id="3.90.1150.10">
    <property type="entry name" value="Aspartate Aminotransferase, domain 1"/>
    <property type="match status" value="1"/>
</dbReference>
<dbReference type="Gene3D" id="3.40.640.10">
    <property type="entry name" value="Type I PLP-dependent aspartate aminotransferase-like (Major domain)"/>
    <property type="match status" value="1"/>
</dbReference>
<dbReference type="InterPro" id="IPR004839">
    <property type="entry name" value="Aminotransferase_I/II_large"/>
</dbReference>
<dbReference type="InterPro" id="IPR005860">
    <property type="entry name" value="CobD"/>
</dbReference>
<dbReference type="InterPro" id="IPR004838">
    <property type="entry name" value="NHTrfase_class1_PyrdxlP-BS"/>
</dbReference>
<dbReference type="InterPro" id="IPR015424">
    <property type="entry name" value="PyrdxlP-dep_Trfase"/>
</dbReference>
<dbReference type="InterPro" id="IPR015421">
    <property type="entry name" value="PyrdxlP-dep_Trfase_major"/>
</dbReference>
<dbReference type="InterPro" id="IPR015422">
    <property type="entry name" value="PyrdxlP-dep_Trfase_small"/>
</dbReference>
<dbReference type="NCBIfam" id="TIGR01140">
    <property type="entry name" value="L_thr_O3P_dcar"/>
    <property type="match status" value="1"/>
</dbReference>
<dbReference type="PANTHER" id="PTHR42885">
    <property type="entry name" value="HISTIDINOL-PHOSPHATE AMINOTRANSFERASE-RELATED"/>
    <property type="match status" value="1"/>
</dbReference>
<dbReference type="PANTHER" id="PTHR42885:SF1">
    <property type="entry name" value="THREONINE-PHOSPHATE DECARBOXYLASE"/>
    <property type="match status" value="1"/>
</dbReference>
<dbReference type="Pfam" id="PF00155">
    <property type="entry name" value="Aminotran_1_2"/>
    <property type="match status" value="1"/>
</dbReference>
<dbReference type="SUPFAM" id="SSF53383">
    <property type="entry name" value="PLP-dependent transferases"/>
    <property type="match status" value="1"/>
</dbReference>
<dbReference type="PROSITE" id="PS00105">
    <property type="entry name" value="AA_TRANSFER_CLASS_1"/>
    <property type="match status" value="1"/>
</dbReference>
<sequence length="333" mass="35014">MSAPIVHGGGITEAAARYGGRPEDWLDLSTGINPCPVALPAVPERAWHRLPDRQTVDDARSAAADYYRTNGVLPLPVPGTQSVIQLLPRLAPANRHVAIFGPTYGEYARVLEAAGFAVDRVADADALTAEHGLVIVVNPNNPTGRALAPAELLAIAARQKASGGLLLVDEAFGDLEPQLSVAGHASGQGNLIVFRSFGKFFGLAGLRLGFVVATEPVLASFADWLGPWAVSGPALTISKALMQGDTKAIAAGILERRAGLDAALDGAGLNRIGGTGLFVLVEHPRAALLQERLCEAHILTRKFDYAPTWLRVGLAPDAAGDRRLADALARMEL</sequence>
<feature type="chain" id="PRO_0000123921" description="Threonine-phosphate decarboxylase">
    <location>
        <begin position="1"/>
        <end position="333"/>
    </location>
</feature>
<feature type="modified residue" description="N6-(pyridoxal phosphate)lysine" evidence="1">
    <location>
        <position position="199"/>
    </location>
</feature>
<evidence type="ECO:0000250" key="1"/>
<evidence type="ECO:0000305" key="2"/>
<accession>P21633</accession>
<protein>
    <recommendedName>
        <fullName>Threonine-phosphate decarboxylase</fullName>
        <ecNumber>4.1.1.81</ecNumber>
    </recommendedName>
    <alternativeName>
        <fullName>L-threonine-O-3-phosphate decarboxylase</fullName>
    </alternativeName>
</protein>
<name>COBC_SINSX</name>
<proteinExistence type="inferred from homology"/>
<keyword id="KW-0169">Cobalamin biosynthesis</keyword>
<keyword id="KW-0963">Cytoplasm</keyword>
<keyword id="KW-0456">Lyase</keyword>
<keyword id="KW-0663">Pyridoxal phosphate</keyword>
<organism>
    <name type="scientific">Sinorhizobium sp</name>
    <dbReference type="NCBI Taxonomy" id="42445"/>
    <lineage>
        <taxon>Bacteria</taxon>
        <taxon>Pseudomonadati</taxon>
        <taxon>Pseudomonadota</taxon>
        <taxon>Alphaproteobacteria</taxon>
        <taxon>Hyphomicrobiales</taxon>
        <taxon>Rhizobiaceae</taxon>
        <taxon>Sinorhizobium/Ensifer group</taxon>
        <taxon>Sinorhizobium</taxon>
    </lineage>
</organism>
<gene>
    <name type="primary">cobC</name>
</gene>